<accession>P61270</accession>
<protein>
    <recommendedName>
        <fullName evidence="3">Small ribosomal subunit protein uS17</fullName>
    </recommendedName>
    <alternativeName>
        <fullName>40S ribosomal protein S11</fullName>
    </alternativeName>
</protein>
<evidence type="ECO:0000250" key="1">
    <source>
        <dbReference type="UniProtKB" id="P62280"/>
    </source>
</evidence>
<evidence type="ECO:0000250" key="2">
    <source>
        <dbReference type="UniProtKB" id="P62281"/>
    </source>
</evidence>
<evidence type="ECO:0000305" key="3"/>
<dbReference type="EMBL" id="AB093675">
    <property type="protein sequence ID" value="BAC21649.1"/>
    <property type="molecule type" value="mRNA"/>
</dbReference>
<dbReference type="RefSeq" id="NP_001271562.1">
    <property type="nucleotide sequence ID" value="NM_001284633.1"/>
</dbReference>
<dbReference type="RefSeq" id="XP_045235932.1">
    <property type="nucleotide sequence ID" value="XM_045379997.2"/>
</dbReference>
<dbReference type="SMR" id="P61270"/>
<dbReference type="IntAct" id="P61270">
    <property type="interactions" value="1"/>
</dbReference>
<dbReference type="MINT" id="P61270"/>
<dbReference type="STRING" id="9541.ENSMFAP00000026249"/>
<dbReference type="GeneID" id="102128541"/>
<dbReference type="VEuPathDB" id="HostDB:ENSMFAG00000044574"/>
<dbReference type="eggNOG" id="KOG1728">
    <property type="taxonomic scope" value="Eukaryota"/>
</dbReference>
<dbReference type="OMA" id="DYEKCPF"/>
<dbReference type="Proteomes" id="UP000233100">
    <property type="component" value="Chromosome 19"/>
</dbReference>
<dbReference type="GO" id="GO:0022627">
    <property type="term" value="C:cytosolic small ribosomal subunit"/>
    <property type="evidence" value="ECO:0007669"/>
    <property type="project" value="TreeGrafter"/>
</dbReference>
<dbReference type="GO" id="GO:0019843">
    <property type="term" value="F:rRNA binding"/>
    <property type="evidence" value="ECO:0007669"/>
    <property type="project" value="UniProtKB-KW"/>
</dbReference>
<dbReference type="GO" id="GO:0003735">
    <property type="term" value="F:structural constituent of ribosome"/>
    <property type="evidence" value="ECO:0007669"/>
    <property type="project" value="InterPro"/>
</dbReference>
<dbReference type="GO" id="GO:0006412">
    <property type="term" value="P:translation"/>
    <property type="evidence" value="ECO:0007669"/>
    <property type="project" value="InterPro"/>
</dbReference>
<dbReference type="CDD" id="cd00364">
    <property type="entry name" value="Ribosomal_uS17"/>
    <property type="match status" value="1"/>
</dbReference>
<dbReference type="FunFam" id="2.40.50.1000:FF:000008">
    <property type="entry name" value="40S ribosomal protein S11"/>
    <property type="match status" value="1"/>
</dbReference>
<dbReference type="Gene3D" id="2.40.50.1000">
    <property type="match status" value="1"/>
</dbReference>
<dbReference type="InterPro" id="IPR012340">
    <property type="entry name" value="NA-bd_OB-fold"/>
</dbReference>
<dbReference type="InterPro" id="IPR000266">
    <property type="entry name" value="Ribosomal_uS17"/>
</dbReference>
<dbReference type="InterPro" id="IPR028333">
    <property type="entry name" value="Ribosomal_uS17_arc/euk"/>
</dbReference>
<dbReference type="InterPro" id="IPR019979">
    <property type="entry name" value="Ribosomal_uS17_CS"/>
</dbReference>
<dbReference type="InterPro" id="IPR032440">
    <property type="entry name" value="Ribosomal_uS17_N"/>
</dbReference>
<dbReference type="NCBIfam" id="NF006345">
    <property type="entry name" value="PRK08572.1"/>
    <property type="match status" value="1"/>
</dbReference>
<dbReference type="NCBIfam" id="TIGR03630">
    <property type="entry name" value="uS17_arch"/>
    <property type="match status" value="1"/>
</dbReference>
<dbReference type="PANTHER" id="PTHR10744">
    <property type="entry name" value="40S RIBOSOMAL PROTEIN S11 FAMILY MEMBER"/>
    <property type="match status" value="1"/>
</dbReference>
<dbReference type="PANTHER" id="PTHR10744:SF52">
    <property type="entry name" value="SMALL RIBOSOMAL SUBUNIT PROTEIN US17"/>
    <property type="match status" value="1"/>
</dbReference>
<dbReference type="Pfam" id="PF00366">
    <property type="entry name" value="Ribosomal_S17"/>
    <property type="match status" value="1"/>
</dbReference>
<dbReference type="Pfam" id="PF16205">
    <property type="entry name" value="Ribosomal_S17_N"/>
    <property type="match status" value="1"/>
</dbReference>
<dbReference type="PRINTS" id="PR00973">
    <property type="entry name" value="RIBOSOMALS17"/>
</dbReference>
<dbReference type="SUPFAM" id="SSF50249">
    <property type="entry name" value="Nucleic acid-binding proteins"/>
    <property type="match status" value="1"/>
</dbReference>
<dbReference type="PROSITE" id="PS00056">
    <property type="entry name" value="RIBOSOMAL_S17"/>
    <property type="match status" value="1"/>
</dbReference>
<organism>
    <name type="scientific">Macaca fascicularis</name>
    <name type="common">Crab-eating macaque</name>
    <name type="synonym">Cynomolgus monkey</name>
    <dbReference type="NCBI Taxonomy" id="9541"/>
    <lineage>
        <taxon>Eukaryota</taxon>
        <taxon>Metazoa</taxon>
        <taxon>Chordata</taxon>
        <taxon>Craniata</taxon>
        <taxon>Vertebrata</taxon>
        <taxon>Euteleostomi</taxon>
        <taxon>Mammalia</taxon>
        <taxon>Eutheria</taxon>
        <taxon>Euarchontoglires</taxon>
        <taxon>Primates</taxon>
        <taxon>Haplorrhini</taxon>
        <taxon>Catarrhini</taxon>
        <taxon>Cercopithecidae</taxon>
        <taxon>Cercopithecinae</taxon>
        <taxon>Macaca</taxon>
    </lineage>
</organism>
<keyword id="KW-0007">Acetylation</keyword>
<keyword id="KW-0164">Citrullination</keyword>
<keyword id="KW-0963">Cytoplasm</keyword>
<keyword id="KW-0449">Lipoprotein</keyword>
<keyword id="KW-0488">Methylation</keyword>
<keyword id="KW-0564">Palmitate</keyword>
<keyword id="KW-0597">Phosphoprotein</keyword>
<keyword id="KW-1185">Reference proteome</keyword>
<keyword id="KW-0687">Ribonucleoprotein</keyword>
<keyword id="KW-0689">Ribosomal protein</keyword>
<keyword id="KW-0694">RNA-binding</keyword>
<keyword id="KW-0699">rRNA-binding</keyword>
<name>RS11_MACFA</name>
<sequence>MADIQTERAYQKQPTIFQNKKRVLLGETGKEKLPRYYKNIGLGFKTPKEAIEGTYIDKKCPFTGNVSIRGRILSGVVTKMKMQRTIVIRRDYLHYIRKYNRFEKRHKNMSVHLSPCFRDVQIGDIVTVGECRPLSKTVRFNVLKVTKAAGTKKQFQKF</sequence>
<comment type="function">
    <text evidence="1">Component of the small ribosomal subunit. The ribosome is a large ribonucleoprotein complex responsible for the synthesis of proteins in the cell.</text>
</comment>
<comment type="subunit">
    <text evidence="1">Component of the small ribosomal subunit.</text>
</comment>
<comment type="subcellular location">
    <subcellularLocation>
        <location evidence="1">Cytoplasm</location>
    </subcellularLocation>
</comment>
<comment type="PTM">
    <text evidence="2">Citrullinated by PADI4.</text>
</comment>
<comment type="similarity">
    <text evidence="3">Belongs to the universal ribosomal protein uS17 family.</text>
</comment>
<feature type="initiator methionine" description="Removed" evidence="1">
    <location>
        <position position="1"/>
    </location>
</feature>
<feature type="chain" id="PRO_0000128510" description="Small ribosomal subunit protein uS17">
    <location>
        <begin position="2"/>
        <end position="158"/>
    </location>
</feature>
<feature type="modified residue" description="N-acetylalanine" evidence="1">
    <location>
        <position position="2"/>
    </location>
</feature>
<feature type="modified residue" description="Citrulline" evidence="2">
    <location>
        <position position="22"/>
    </location>
</feature>
<feature type="modified residue" description="N6-acetyllysine" evidence="1">
    <location>
        <position position="38"/>
    </location>
</feature>
<feature type="modified residue" description="N6-acetyllysine" evidence="1">
    <location>
        <position position="45"/>
    </location>
</feature>
<feature type="modified residue" description="N6-acetyllysine" evidence="2">
    <location>
        <position position="58"/>
    </location>
</feature>
<feature type="modified residue" description="Phosphoserine" evidence="1">
    <location>
        <position position="67"/>
    </location>
</feature>
<feature type="modified residue" description="Omega-N-methylarginine" evidence="2">
    <location>
        <position position="69"/>
    </location>
</feature>
<feature type="modified residue" description="Phosphoserine" evidence="1">
    <location>
        <position position="110"/>
    </location>
</feature>
<feature type="lipid moiety-binding region" description="S-palmitoyl cysteine" evidence="1">
    <location>
        <position position="60"/>
    </location>
</feature>
<proteinExistence type="evidence at transcript level"/>
<reference key="1">
    <citation type="journal article" date="2001" name="Gene">
        <title>Assignment of 118 novel cDNAs of cynomolgus monkey brain to human chromosomes.</title>
        <authorList>
            <person name="Osada N."/>
            <person name="Hida M."/>
            <person name="Kususda J."/>
            <person name="Tanuma R."/>
            <person name="Iseki K."/>
            <person name="Hirata M."/>
            <person name="Suto Y."/>
            <person name="Hirai M."/>
            <person name="Terao K."/>
            <person name="Suzuki Y."/>
            <person name="Sugano S."/>
            <person name="Hashimoto K."/>
        </authorList>
    </citation>
    <scope>NUCLEOTIDE SEQUENCE [LARGE SCALE MRNA]</scope>
    <source>
        <tissue>Parietal cortex</tissue>
    </source>
</reference>
<reference key="2">
    <citation type="journal article" date="2001" name="Gene">
        <authorList>
            <person name="Osada N."/>
            <person name="Hida M."/>
            <person name="Kusuda J."/>
            <person name="Tanuma R."/>
            <person name="Iseki K."/>
            <person name="Hirata M."/>
            <person name="Suto Y."/>
            <person name="Hirai M."/>
            <person name="Terao K."/>
            <person name="Suzuki Y."/>
            <person name="Sugano S."/>
            <person name="Hashimoto K."/>
            <person name="Kususda J."/>
        </authorList>
    </citation>
    <scope>ERRATUM OF PUBMED:11574149</scope>
</reference>
<gene>
    <name type="primary">RPS11</name>
    <name type="ORF">QnpA-10190</name>
</gene>